<evidence type="ECO:0000255" key="1"/>
<evidence type="ECO:0000269" key="2">
    <source>
    </source>
</evidence>
<evidence type="ECO:0000303" key="3">
    <source>
    </source>
</evidence>
<evidence type="ECO:0000305" key="4"/>
<evidence type="ECO:0000305" key="5">
    <source>
    </source>
</evidence>
<reference key="1">
    <citation type="journal article" date="2014" name="BMC Genomics">
        <title>Comparative genome sequencing reveals chemotype-specific gene clusters in the toxigenic black mold Stachybotrys.</title>
        <authorList>
            <person name="Semeiks J."/>
            <person name="Borek D."/>
            <person name="Otwinowski Z."/>
            <person name="Grishin N.V."/>
        </authorList>
    </citation>
    <scope>NUCLEOTIDE SEQUENCE [LARGE SCALE GENOMIC DNA]</scope>
    <scope>IDENTIFICATION</scope>
    <scope>FUNCTION</scope>
    <source>
        <strain>CBS 109288 / IBT 7711</strain>
    </source>
</reference>
<name>SAT4_STACB</name>
<keyword id="KW-0472">Membrane</keyword>
<keyword id="KW-0812">Transmembrane</keyword>
<keyword id="KW-1133">Transmembrane helix</keyword>
<organism>
    <name type="scientific">Stachybotrys chartarum (strain CBS 109288 / IBT 7711)</name>
    <name type="common">Toxic black mold</name>
    <name type="synonym">Stilbospora chartarum</name>
    <dbReference type="NCBI Taxonomy" id="1280523"/>
    <lineage>
        <taxon>Eukaryota</taxon>
        <taxon>Fungi</taxon>
        <taxon>Dikarya</taxon>
        <taxon>Ascomycota</taxon>
        <taxon>Pezizomycotina</taxon>
        <taxon>Sordariomycetes</taxon>
        <taxon>Hypocreomycetidae</taxon>
        <taxon>Hypocreales</taxon>
        <taxon>Stachybotryaceae</taxon>
        <taxon>Stachybotrys</taxon>
    </lineage>
</organism>
<feature type="chain" id="PRO_0000442391" description="Satratoxin biosynthesis SC1 cluster protein 4">
    <location>
        <begin position="1"/>
        <end position="268"/>
    </location>
</feature>
<feature type="transmembrane region" description="Helical" evidence="1">
    <location>
        <begin position="34"/>
        <end position="54"/>
    </location>
</feature>
<feature type="transmembrane region" description="Helical" evidence="1">
    <location>
        <begin position="78"/>
        <end position="98"/>
    </location>
</feature>
<feature type="transmembrane region" description="Helical" evidence="1">
    <location>
        <begin position="113"/>
        <end position="133"/>
    </location>
</feature>
<feature type="transmembrane region" description="Helical" evidence="1">
    <location>
        <begin position="145"/>
        <end position="165"/>
    </location>
</feature>
<proteinExistence type="inferred from homology"/>
<accession>A0A084B9Z2</accession>
<gene>
    <name evidence="3" type="primary">SAT4</name>
    <name type="ORF">S7711_07278</name>
</gene>
<protein>
    <recommendedName>
        <fullName evidence="3">Satratoxin biosynthesis SC1 cluster protein 4</fullName>
    </recommendedName>
</protein>
<sequence>MNGIYALQQTFVKFSLLALYHRLFWVNRHFVRSVWLVGIVQGCWGIAILLVHIFLCTPMEKIWTPWMVEGTCVDVNTLFAIYEALNSVLDFIVAGLAIWMLPSLQIRKSTRWHLAGLFVLGAFSGFIGIIKIVEAYDSAQRNFQAVIWNVVQMSISIICCCAPIYRSILPKMGMSSIPSWASWSLRGSSRRSKAVASTADGTSKFSMRSYQGEGKAGGTSVSGNWINLDGSSQRALAWVDAESHGKDQSTYQDIPMGRMKVERSVEVI</sequence>
<dbReference type="EMBL" id="KL647604">
    <property type="protein sequence ID" value="KEY74371.1"/>
    <property type="molecule type" value="Genomic_DNA"/>
</dbReference>
<dbReference type="HOGENOM" id="CLU_1038910_0_0_1"/>
<dbReference type="OrthoDB" id="296119at5125"/>
<dbReference type="Proteomes" id="UP000028045">
    <property type="component" value="Unassembled WGS sequence"/>
</dbReference>
<dbReference type="GO" id="GO:0016020">
    <property type="term" value="C:membrane"/>
    <property type="evidence" value="ECO:0007669"/>
    <property type="project" value="UniProtKB-SubCell"/>
</dbReference>
<dbReference type="InterPro" id="IPR049326">
    <property type="entry name" value="Rhodopsin_dom_fungi"/>
</dbReference>
<dbReference type="InterPro" id="IPR052337">
    <property type="entry name" value="SAT4-like"/>
</dbReference>
<dbReference type="PANTHER" id="PTHR33048:SF47">
    <property type="entry name" value="INTEGRAL MEMBRANE PROTEIN-RELATED"/>
    <property type="match status" value="1"/>
</dbReference>
<dbReference type="PANTHER" id="PTHR33048">
    <property type="entry name" value="PTH11-LIKE INTEGRAL MEMBRANE PROTEIN (AFU_ORTHOLOGUE AFUA_5G11245)"/>
    <property type="match status" value="1"/>
</dbReference>
<dbReference type="Pfam" id="PF20684">
    <property type="entry name" value="Fung_rhodopsin"/>
    <property type="match status" value="1"/>
</dbReference>
<comment type="function">
    <text evidence="5">Part of the satratoxin SC1 cluster involved in the biosynthesis of satratoxins, trichothecene mycotoxins that are associated with human food poisonings (PubMed:25015739). Satratoxins are suggested to be made by products of multiple gene clusters (SC1, SC2 and SC3) that encode 21 proteins in all, including polyketide synthases, acetyltransferases, and other enzymes expected to modify the trichothecene skeleton (PubMed:25015739). SC1 encodes 10 proteins, SAT1 to SAT10 (PubMed:25015739). The largest are SAT8, which encodes a putative polyketide synthase (PKS) with a conventional non-reducing architecture, and SAT10, a putative protein containing four ankyrin repeats and thus may be involved in protein scaffolding (PubMed:25015739). The putative short-chain reductase SAT3 may assist the PKS in some capacity (PubMed:25015739). SAT6 contains a secretory lipase domain and acts probably as a trichothecene esterase (PubMed:25015739). SAT5 encodes a putative acetyltransferase, and so, with SAT6, may affect endogenous protection from toxicity (PubMed:25015739). The probable transcription factor SAT9 may regulate the expression of the SC1 cluster (PubMed:25015739). SC2 encodes proteins SAT11 to SAT16, the largest of which encodes the putative reducing PKS SAT13 (PubMed:25015739). SAT11 is a cytochrome P450 monooxygenase, while SAT14 and SAT16 are probable acetyltransferases (PubMed:25015739). The SC2 cluster may be regulated by the transcription factor SAT15 (PubMed:25015739). SC3 is a small cluster that encodes 5 proteins, SAT17 to SAT21 (PubMed:25015739). SAT21 is a putative MFS-type transporter which may have a role in exporting secondary metabolites (PubMed:25015739). The four other proteins putatively encoded in SC3 include the taurine hydroxylase-like protein SAT17, the O-methyltransferase SAT18, the acetyltransferase SAT19, and the Cys6-type zinc finger SAT20, the latter being probably involved in regulation of SC3 expression (PubMed:25015739).</text>
</comment>
<comment type="pathway">
    <text evidence="2">Mycotoxin biosynthesis.</text>
</comment>
<comment type="subcellular location">
    <subcellularLocation>
        <location evidence="1">Membrane</location>
        <topology evidence="1">Multi-pass membrane protein</topology>
    </subcellularLocation>
</comment>
<comment type="miscellaneous">
    <text evidence="4">Trichothecenes are sesquiterpenoid toxins that act by inhibiting protein biosynthesis.</text>
</comment>
<comment type="similarity">
    <text evidence="4">Belongs to the SAT4 family.</text>
</comment>